<organism>
    <name type="scientific">Neltuma juliflora</name>
    <name type="common">Mesquite</name>
    <name type="synonym">Prosopis juliflora</name>
    <dbReference type="NCBI Taxonomy" id="3128859"/>
    <lineage>
        <taxon>Eukaryota</taxon>
        <taxon>Viridiplantae</taxon>
        <taxon>Streptophyta</taxon>
        <taxon>Embryophyta</taxon>
        <taxon>Tracheophyta</taxon>
        <taxon>Spermatophyta</taxon>
        <taxon>Magnoliopsida</taxon>
        <taxon>eudicotyledons</taxon>
        <taxon>Gunneridae</taxon>
        <taxon>Pentapetalae</taxon>
        <taxon>rosids</taxon>
        <taxon>fabids</taxon>
        <taxon>Fabales</taxon>
        <taxon>Fabaceae</taxon>
        <taxon>Caesalpinioideae</taxon>
        <taxon>mimosoid clade</taxon>
        <taxon>Acacieae</taxon>
        <taxon>Neltuma</taxon>
    </lineage>
</organism>
<sequence>QELLDVDGEILRNGGSYYILPAFRGKGGGLELAKTEGETCPLTVVQARSETDRGLPASIWSPPRIAIIRPGFSLNIEFRPRNPSACHRESSLQWKVEEESQQVKIAVKEDARGFGPFRIRPHRDDYKLVYCDEGQKR</sequence>
<feature type="chain" id="PRO_0000083300" description="Kunitz-type trypsin inhibitor alpha chain">
    <location>
        <begin position="1"/>
        <end position="137"/>
    </location>
</feature>
<feature type="site" description="Reactive bond for trypsin">
    <location>
        <begin position="64"/>
        <end position="65"/>
    </location>
</feature>
<feature type="disulfide bond" evidence="1">
    <location>
        <begin position="40"/>
        <end position="86"/>
    </location>
</feature>
<feature type="disulfide bond" description="Interchain (with beta chain)" evidence="1">
    <location>
        <position position="131"/>
    </location>
</feature>
<accession>P32733</accession>
<name>ID5A_NELJU</name>
<keyword id="KW-0903">Direct protein sequencing</keyword>
<keyword id="KW-1015">Disulfide bond</keyword>
<keyword id="KW-0646">Protease inhibitor</keyword>
<keyword id="KW-0722">Serine protease inhibitor</keyword>
<reference key="1">
    <citation type="journal article" date="1991" name="Phytochemistry">
        <title>The complete amino acid sequence of the major Kunitz trypsin inhibitor from the seeds of Prosopsis juliflora.</title>
        <authorList>
            <person name="Negreiros A.N."/>
            <person name="Carvalho M.M."/>
            <person name="Xavier Filho J."/>
            <person name="Blanco-Labra A."/>
            <person name="Shewry P.R."/>
            <person name="Richardson M."/>
        </authorList>
    </citation>
    <scope>PROTEIN SEQUENCE</scope>
    <source>
        <tissue>Seed</tissue>
    </source>
</reference>
<protein>
    <recommendedName>
        <fullName>Kunitz-type trypsin inhibitor alpha chain</fullName>
    </recommendedName>
</protein>
<evidence type="ECO:0000250" key="1"/>
<evidence type="ECO:0000305" key="2"/>
<proteinExistence type="evidence at protein level"/>
<dbReference type="PIR" id="B45588">
    <property type="entry name" value="B45588"/>
</dbReference>
<dbReference type="SMR" id="P32733"/>
<dbReference type="MEROPS" id="I03.019"/>
<dbReference type="GO" id="GO:0004867">
    <property type="term" value="F:serine-type endopeptidase inhibitor activity"/>
    <property type="evidence" value="ECO:0007669"/>
    <property type="project" value="UniProtKB-KW"/>
</dbReference>
<dbReference type="Gene3D" id="2.80.10.50">
    <property type="match status" value="1"/>
</dbReference>
<dbReference type="InterPro" id="IPR011065">
    <property type="entry name" value="Kunitz_inhibitor_STI-like_sf"/>
</dbReference>
<dbReference type="InterPro" id="IPR002160">
    <property type="entry name" value="Prot_inh_Kunz-lg"/>
</dbReference>
<dbReference type="PANTHER" id="PTHR33107">
    <property type="entry name" value="KUNITZ TRYPSIN INHIBITOR 2"/>
    <property type="match status" value="1"/>
</dbReference>
<dbReference type="PANTHER" id="PTHR33107:SF81">
    <property type="entry name" value="TRYPSIN INHIBITOR A"/>
    <property type="match status" value="1"/>
</dbReference>
<dbReference type="Pfam" id="PF00197">
    <property type="entry name" value="Kunitz_legume"/>
    <property type="match status" value="1"/>
</dbReference>
<dbReference type="PRINTS" id="PR00291">
    <property type="entry name" value="KUNITZINHBTR"/>
</dbReference>
<dbReference type="SMART" id="SM00452">
    <property type="entry name" value="STI"/>
    <property type="match status" value="1"/>
</dbReference>
<dbReference type="SUPFAM" id="SSF50386">
    <property type="entry name" value="STI-like"/>
    <property type="match status" value="1"/>
</dbReference>
<dbReference type="PROSITE" id="PS00283">
    <property type="entry name" value="SOYBEAN_KUNITZ"/>
    <property type="match status" value="1"/>
</dbReference>
<comment type="function">
    <text>Inhibition of trypsin.</text>
</comment>
<comment type="subunit">
    <text>Heterodimer of an alpha and a beta chain linked by a disulfide bond.</text>
</comment>
<comment type="similarity">
    <text evidence="2">Belongs to the protease inhibitor I3 (leguminous Kunitz-type inhibitor) family.</text>
</comment>